<evidence type="ECO:0000250" key="1">
    <source>
        <dbReference type="UniProtKB" id="Q5W041"/>
    </source>
</evidence>
<evidence type="ECO:0000256" key="2">
    <source>
        <dbReference type="SAM" id="MobiDB-lite"/>
    </source>
</evidence>
<evidence type="ECO:0000269" key="3">
    <source>
    </source>
</evidence>
<evidence type="ECO:0000303" key="4">
    <source>
    </source>
</evidence>
<organism>
    <name type="scientific">Mus musculus</name>
    <name type="common">Mouse</name>
    <dbReference type="NCBI Taxonomy" id="10090"/>
    <lineage>
        <taxon>Eukaryota</taxon>
        <taxon>Metazoa</taxon>
        <taxon>Chordata</taxon>
        <taxon>Craniata</taxon>
        <taxon>Vertebrata</taxon>
        <taxon>Euteleostomi</taxon>
        <taxon>Mammalia</taxon>
        <taxon>Eutheria</taxon>
        <taxon>Euarchontoglires</taxon>
        <taxon>Glires</taxon>
        <taxon>Rodentia</taxon>
        <taxon>Myomorpha</taxon>
        <taxon>Muroidea</taxon>
        <taxon>Muridae</taxon>
        <taxon>Murinae</taxon>
        <taxon>Mus</taxon>
        <taxon>Mus</taxon>
    </lineage>
</organism>
<comment type="function">
    <text evidence="3">Essential for male fertility and sperm motility. During spermatogenesis, promotes the autophagic degradation of excessive ribosomes, providing energy resources for mitochondria and thus ensuring sperm flagellar motility.</text>
</comment>
<comment type="subunit">
    <text evidence="1 3">Homodimer (By similarity). Interacts with PIK3C3, PIK3R4 and BECN1. Interacts (via ARM domains) with ATG14 (PubMed:34428398).</text>
</comment>
<comment type="alternative products">
    <event type="alternative splicing"/>
    <isoform>
        <id>A2AU72-1</id>
        <name>1</name>
        <sequence type="displayed"/>
    </isoform>
    <isoform>
        <id>A2AU72-2</id>
        <name>2</name>
        <sequence type="described" ref="VSP_024502 VSP_024503 VSP_024504"/>
    </isoform>
</comment>
<comment type="tissue specificity">
    <text evidence="3">Testis-specific.</text>
</comment>
<comment type="PTM">
    <text evidence="3">Palmitoylation is important for its function in autophagy.</text>
</comment>
<comment type="disruption phenotype">
    <text evidence="3">Mice have normal viability but show complete male infertility. Autophagic degradation of cytosolic ribosomes is blocked in ARMC3-deficient spermatids, which causes low energy levels of mitochondria and motionless sperm flagella.</text>
</comment>
<gene>
    <name type="primary">Armc3</name>
</gene>
<name>ARMC3_MOUSE</name>
<feature type="chain" id="PRO_0000284404" description="Armadillo repeat-containing protein 3">
    <location>
        <begin position="1"/>
        <end position="881"/>
    </location>
</feature>
<feature type="repeat" description="ARM 1">
    <location>
        <begin position="15"/>
        <end position="54"/>
    </location>
</feature>
<feature type="repeat" description="ARM 2">
    <location>
        <begin position="57"/>
        <end position="96"/>
    </location>
</feature>
<feature type="repeat" description="ARM 3">
    <location>
        <begin position="98"/>
        <end position="138"/>
    </location>
</feature>
<feature type="repeat" description="ARM 4">
    <location>
        <begin position="140"/>
        <end position="179"/>
    </location>
</feature>
<feature type="repeat" description="ARM 5">
    <location>
        <begin position="181"/>
        <end position="220"/>
    </location>
</feature>
<feature type="repeat" description="ARM 6">
    <location>
        <begin position="222"/>
        <end position="262"/>
    </location>
</feature>
<feature type="repeat" description="ARM 7">
    <location>
        <begin position="264"/>
        <end position="304"/>
    </location>
</feature>
<feature type="repeat" description="ARM 8">
    <location>
        <begin position="306"/>
        <end position="345"/>
    </location>
</feature>
<feature type="repeat" description="ARM 9">
    <location>
        <begin position="346"/>
        <end position="385"/>
    </location>
</feature>
<feature type="repeat" description="ARM 10">
    <location>
        <begin position="388"/>
        <end position="427"/>
    </location>
</feature>
<feature type="repeat" description="ARM 11">
    <location>
        <begin position="429"/>
        <end position="468"/>
    </location>
</feature>
<feature type="repeat" description="ARM 12">
    <location>
        <begin position="470"/>
        <end position="509"/>
    </location>
</feature>
<feature type="region of interest" description="Disordered" evidence="2">
    <location>
        <begin position="605"/>
        <end position="659"/>
    </location>
</feature>
<feature type="compositionally biased region" description="Low complexity" evidence="2">
    <location>
        <begin position="622"/>
        <end position="636"/>
    </location>
</feature>
<feature type="lipid moiety-binding region" description="S-palmitoyl cysteine" evidence="3">
    <location>
        <position position="507"/>
    </location>
</feature>
<feature type="lipid moiety-binding region" description="S-palmitoyl cysteine" evidence="3">
    <location>
        <position position="518"/>
    </location>
</feature>
<feature type="splice variant" id="VSP_024502" description="In isoform 2." evidence="4">
    <original>N</original>
    <variation>NFRFS</variation>
    <location>
        <position position="644"/>
    </location>
</feature>
<feature type="splice variant" id="VSP_024503" description="In isoform 2." evidence="4">
    <original>SKKKS</original>
    <variation>RKGKG</variation>
    <location>
        <begin position="676"/>
        <end position="680"/>
    </location>
</feature>
<feature type="splice variant" id="VSP_024504" description="In isoform 2." evidence="4">
    <location>
        <begin position="681"/>
        <end position="881"/>
    </location>
</feature>
<feature type="mutagenesis site" description="Reduced level of palmitoylation and inability to rescue the autophagic flux in ARMC3-deficient embryonic fibrobalsts; when associated with A-518." evidence="3">
    <original>C</original>
    <variation>A</variation>
    <location>
        <position position="507"/>
    </location>
</feature>
<feature type="mutagenesis site" description="Reduced level of palmitoylation and inability to rescue the autophagic flux in ARMC3-deficient embryonic fibrobalsts; when associated with A-507." evidence="3">
    <original>C</original>
    <variation>A</variation>
    <location>
        <position position="518"/>
    </location>
</feature>
<sequence>MGKKIKKEVEPPPKDVFDPITIESKKAATVVLMLKSPEEDILAKACEAIYKFALKGEENKATLLELGAVEPLTKLLTHEDKTVRRNAMMIFGILASNSDVKKLLRELEVMNSVIAQLSPEEEVVIHEFASLCLANMSVEYTGKVQIFEHGGLEPLIRLLSSSDPDVKKNSIECIYNLVQDFQCRTTLQELNAIPPILELLRSEYPIIQLLALKTLGVITCDKEARTMLKENQGLDHLTKILETKELNDLHVEALSVIANCLEDMDTMVLMQQTGSLKKVLSFAESSTIPDIQKNAAKAIAKAAYDPENRKVFHEQEVEKCLVTLLGSDSDGTKIAASQAISALCENLSCKEFFNTQGIPQIVQLLRSDNEEVREAAALALANLTTSSPANANAAAEADAIDPLINILSSKRDGAIANAATVLTNMATQEPLRAIIQNHEIMHALLGPLHSTNTLVQSTAALTVAATACDVEARTQLRNCGGLVPLVGLLHSKNDEVRRHASWAVMVCAGDEPMAVELCRLGALNILEEINRSLSRKNKFSEAAYNKLLNNNLSLKYSQTGYLSSSNIISDGFYDYGRINPGTKLLSLKELCLQELNDQRAILLVNNKSDTSPPPSMEDKSSDVGYGRSISSSSSLRRGSKEKANAIFGSPTEEKSEPASVRNTILSRAFTKEKGVSKKKSRLQLICSSYLLWKGKGKKEEEKVKEEEEILALPKFTEGSPEKEWNPPPDPEFCVYVLEVTKSILPIVNLKEQIEVLAKYVADKMGGKIPKEKLADFSWELHISELKFQLKSNVVPIGYIKKGIFYHRALLFKALADKIGVGCSLVRGEYSRGWNEVKLVNEARKGMIGNLPPPEEYIVDLMFHPGNLLKLRSKEADLYRFL</sequence>
<accession>A2AU72</accession>
<accession>Q8BY67</accession>
<protein>
    <recommendedName>
        <fullName>Armadillo repeat-containing protein 3</fullName>
    </recommendedName>
</protein>
<reference key="1">
    <citation type="journal article" date="2005" name="Science">
        <title>The transcriptional landscape of the mammalian genome.</title>
        <authorList>
            <person name="Carninci P."/>
            <person name="Kasukawa T."/>
            <person name="Katayama S."/>
            <person name="Gough J."/>
            <person name="Frith M.C."/>
            <person name="Maeda N."/>
            <person name="Oyama R."/>
            <person name="Ravasi T."/>
            <person name="Lenhard B."/>
            <person name="Wells C."/>
            <person name="Kodzius R."/>
            <person name="Shimokawa K."/>
            <person name="Bajic V.B."/>
            <person name="Brenner S.E."/>
            <person name="Batalov S."/>
            <person name="Forrest A.R."/>
            <person name="Zavolan M."/>
            <person name="Davis M.J."/>
            <person name="Wilming L.G."/>
            <person name="Aidinis V."/>
            <person name="Allen J.E."/>
            <person name="Ambesi-Impiombato A."/>
            <person name="Apweiler R."/>
            <person name="Aturaliya R.N."/>
            <person name="Bailey T.L."/>
            <person name="Bansal M."/>
            <person name="Baxter L."/>
            <person name="Beisel K.W."/>
            <person name="Bersano T."/>
            <person name="Bono H."/>
            <person name="Chalk A.M."/>
            <person name="Chiu K.P."/>
            <person name="Choudhary V."/>
            <person name="Christoffels A."/>
            <person name="Clutterbuck D.R."/>
            <person name="Crowe M.L."/>
            <person name="Dalla E."/>
            <person name="Dalrymple B.P."/>
            <person name="de Bono B."/>
            <person name="Della Gatta G."/>
            <person name="di Bernardo D."/>
            <person name="Down T."/>
            <person name="Engstrom P."/>
            <person name="Fagiolini M."/>
            <person name="Faulkner G."/>
            <person name="Fletcher C.F."/>
            <person name="Fukushima T."/>
            <person name="Furuno M."/>
            <person name="Futaki S."/>
            <person name="Gariboldi M."/>
            <person name="Georgii-Hemming P."/>
            <person name="Gingeras T.R."/>
            <person name="Gojobori T."/>
            <person name="Green R.E."/>
            <person name="Gustincich S."/>
            <person name="Harbers M."/>
            <person name="Hayashi Y."/>
            <person name="Hensch T.K."/>
            <person name="Hirokawa N."/>
            <person name="Hill D."/>
            <person name="Huminiecki L."/>
            <person name="Iacono M."/>
            <person name="Ikeo K."/>
            <person name="Iwama A."/>
            <person name="Ishikawa T."/>
            <person name="Jakt M."/>
            <person name="Kanapin A."/>
            <person name="Katoh M."/>
            <person name="Kawasawa Y."/>
            <person name="Kelso J."/>
            <person name="Kitamura H."/>
            <person name="Kitano H."/>
            <person name="Kollias G."/>
            <person name="Krishnan S.P."/>
            <person name="Kruger A."/>
            <person name="Kummerfeld S.K."/>
            <person name="Kurochkin I.V."/>
            <person name="Lareau L.F."/>
            <person name="Lazarevic D."/>
            <person name="Lipovich L."/>
            <person name="Liu J."/>
            <person name="Liuni S."/>
            <person name="McWilliam S."/>
            <person name="Madan Babu M."/>
            <person name="Madera M."/>
            <person name="Marchionni L."/>
            <person name="Matsuda H."/>
            <person name="Matsuzawa S."/>
            <person name="Miki H."/>
            <person name="Mignone F."/>
            <person name="Miyake S."/>
            <person name="Morris K."/>
            <person name="Mottagui-Tabar S."/>
            <person name="Mulder N."/>
            <person name="Nakano N."/>
            <person name="Nakauchi H."/>
            <person name="Ng P."/>
            <person name="Nilsson R."/>
            <person name="Nishiguchi S."/>
            <person name="Nishikawa S."/>
            <person name="Nori F."/>
            <person name="Ohara O."/>
            <person name="Okazaki Y."/>
            <person name="Orlando V."/>
            <person name="Pang K.C."/>
            <person name="Pavan W.J."/>
            <person name="Pavesi G."/>
            <person name="Pesole G."/>
            <person name="Petrovsky N."/>
            <person name="Piazza S."/>
            <person name="Reed J."/>
            <person name="Reid J.F."/>
            <person name="Ring B.Z."/>
            <person name="Ringwald M."/>
            <person name="Rost B."/>
            <person name="Ruan Y."/>
            <person name="Salzberg S.L."/>
            <person name="Sandelin A."/>
            <person name="Schneider C."/>
            <person name="Schoenbach C."/>
            <person name="Sekiguchi K."/>
            <person name="Semple C.A."/>
            <person name="Seno S."/>
            <person name="Sessa L."/>
            <person name="Sheng Y."/>
            <person name="Shibata Y."/>
            <person name="Shimada H."/>
            <person name="Shimada K."/>
            <person name="Silva D."/>
            <person name="Sinclair B."/>
            <person name="Sperling S."/>
            <person name="Stupka E."/>
            <person name="Sugiura K."/>
            <person name="Sultana R."/>
            <person name="Takenaka Y."/>
            <person name="Taki K."/>
            <person name="Tammoja K."/>
            <person name="Tan S.L."/>
            <person name="Tang S."/>
            <person name="Taylor M.S."/>
            <person name="Tegner J."/>
            <person name="Teichmann S.A."/>
            <person name="Ueda H.R."/>
            <person name="van Nimwegen E."/>
            <person name="Verardo R."/>
            <person name="Wei C.L."/>
            <person name="Yagi K."/>
            <person name="Yamanishi H."/>
            <person name="Zabarovsky E."/>
            <person name="Zhu S."/>
            <person name="Zimmer A."/>
            <person name="Hide W."/>
            <person name="Bult C."/>
            <person name="Grimmond S.M."/>
            <person name="Teasdale R.D."/>
            <person name="Liu E.T."/>
            <person name="Brusic V."/>
            <person name="Quackenbush J."/>
            <person name="Wahlestedt C."/>
            <person name="Mattick J.S."/>
            <person name="Hume D.A."/>
            <person name="Kai C."/>
            <person name="Sasaki D."/>
            <person name="Tomaru Y."/>
            <person name="Fukuda S."/>
            <person name="Kanamori-Katayama M."/>
            <person name="Suzuki M."/>
            <person name="Aoki J."/>
            <person name="Arakawa T."/>
            <person name="Iida J."/>
            <person name="Imamura K."/>
            <person name="Itoh M."/>
            <person name="Kato T."/>
            <person name="Kawaji H."/>
            <person name="Kawagashira N."/>
            <person name="Kawashima T."/>
            <person name="Kojima M."/>
            <person name="Kondo S."/>
            <person name="Konno H."/>
            <person name="Nakano K."/>
            <person name="Ninomiya N."/>
            <person name="Nishio T."/>
            <person name="Okada M."/>
            <person name="Plessy C."/>
            <person name="Shibata K."/>
            <person name="Shiraki T."/>
            <person name="Suzuki S."/>
            <person name="Tagami M."/>
            <person name="Waki K."/>
            <person name="Watahiki A."/>
            <person name="Okamura-Oho Y."/>
            <person name="Suzuki H."/>
            <person name="Kawai J."/>
            <person name="Hayashizaki Y."/>
        </authorList>
    </citation>
    <scope>NUCLEOTIDE SEQUENCE [LARGE SCALE MRNA] (ISOFORM 2)</scope>
    <source>
        <strain>C57BL/6J</strain>
        <tissue>Thymus</tissue>
    </source>
</reference>
<reference key="2">
    <citation type="journal article" date="2009" name="PLoS Biol.">
        <title>Lineage-specific biology revealed by a finished genome assembly of the mouse.</title>
        <authorList>
            <person name="Church D.M."/>
            <person name="Goodstadt L."/>
            <person name="Hillier L.W."/>
            <person name="Zody M.C."/>
            <person name="Goldstein S."/>
            <person name="She X."/>
            <person name="Bult C.J."/>
            <person name="Agarwala R."/>
            <person name="Cherry J.L."/>
            <person name="DiCuccio M."/>
            <person name="Hlavina W."/>
            <person name="Kapustin Y."/>
            <person name="Meric P."/>
            <person name="Maglott D."/>
            <person name="Birtle Z."/>
            <person name="Marques A.C."/>
            <person name="Graves T."/>
            <person name="Zhou S."/>
            <person name="Teague B."/>
            <person name="Potamousis K."/>
            <person name="Churas C."/>
            <person name="Place M."/>
            <person name="Herschleb J."/>
            <person name="Runnheim R."/>
            <person name="Forrest D."/>
            <person name="Amos-Landgraf J."/>
            <person name="Schwartz D.C."/>
            <person name="Cheng Z."/>
            <person name="Lindblad-Toh K."/>
            <person name="Eichler E.E."/>
            <person name="Ponting C.P."/>
        </authorList>
    </citation>
    <scope>NUCLEOTIDE SEQUENCE [LARGE SCALE GENOMIC DNA]</scope>
    <source>
        <strain>C57BL/6J</strain>
    </source>
</reference>
<reference key="3">
    <citation type="journal article" date="2010" name="Cell">
        <title>A tissue-specific atlas of mouse protein phosphorylation and expression.</title>
        <authorList>
            <person name="Huttlin E.L."/>
            <person name="Jedrychowski M.P."/>
            <person name="Elias J.E."/>
            <person name="Goswami T."/>
            <person name="Rad R."/>
            <person name="Beausoleil S.A."/>
            <person name="Villen J."/>
            <person name="Haas W."/>
            <person name="Sowa M.E."/>
            <person name="Gygi S.P."/>
        </authorList>
    </citation>
    <scope>IDENTIFICATION BY MASS SPECTROMETRY [LARGE SCALE ANALYSIS]</scope>
    <source>
        <tissue>Testis</tissue>
    </source>
</reference>
<reference key="4">
    <citation type="journal article" date="2021" name="Dev. Cell">
        <title>Autophagic elimination of ribosomes during spermiogenesis provides energy for flagellar motility.</title>
        <authorList>
            <person name="Lei Y."/>
            <person name="Zhang X."/>
            <person name="Xu Q."/>
            <person name="Liu S."/>
            <person name="Li C."/>
            <person name="Jiang H."/>
            <person name="Lin H."/>
            <person name="Kong E."/>
            <person name="Liu J."/>
            <person name="Qi S."/>
            <person name="Li H."/>
            <person name="Xu W."/>
            <person name="Lu K."/>
        </authorList>
    </citation>
    <scope>FUNCTION</scope>
    <scope>DISRUPTION PHENOTYPE</scope>
    <scope>TISSUE SPECIFICITY</scope>
    <scope>INTERACTION WITH PIK3C3; PIK3R4; BECN1 AND ATG14</scope>
    <scope>PALMITOYLATION AT CYS-507 AND CYS-518</scope>
    <scope>MUTAGENESIS OF CYS-507 AND CYS-518</scope>
</reference>
<proteinExistence type="evidence at protein level"/>
<dbReference type="EMBL" id="AK041744">
    <property type="protein sequence ID" value="BAC31050.1"/>
    <property type="molecule type" value="mRNA"/>
</dbReference>
<dbReference type="EMBL" id="AL929034">
    <property type="status" value="NOT_ANNOTATED_CDS"/>
    <property type="molecule type" value="Genomic_DNA"/>
</dbReference>
<dbReference type="CCDS" id="CCDS38052.1">
    <molecule id="A2AU72-1"/>
</dbReference>
<dbReference type="RefSeq" id="NP_001074552.1">
    <molecule id="A2AU72-1"/>
    <property type="nucleotide sequence ID" value="NM_001081083.2"/>
</dbReference>
<dbReference type="SMR" id="A2AU72"/>
<dbReference type="FunCoup" id="A2AU72">
    <property type="interactions" value="11"/>
</dbReference>
<dbReference type="STRING" id="10090.ENSMUSP00000110287"/>
<dbReference type="PhosphoSitePlus" id="A2AU72"/>
<dbReference type="SwissPalm" id="A2AU72"/>
<dbReference type="PaxDb" id="10090-ENSMUSP00000110287"/>
<dbReference type="ProteomicsDB" id="277292">
    <molecule id="A2AU72-1"/>
</dbReference>
<dbReference type="ProteomicsDB" id="277293">
    <molecule id="A2AU72-2"/>
</dbReference>
<dbReference type="Antibodypedia" id="44327">
    <property type="antibodies" value="84 antibodies from 17 providers"/>
</dbReference>
<dbReference type="Ensembl" id="ENSMUST00000114640.9">
    <molecule id="A2AU72-1"/>
    <property type="protein sequence ID" value="ENSMUSP00000110287.3"/>
    <property type="gene ID" value="ENSMUSG00000037683.15"/>
</dbReference>
<dbReference type="GeneID" id="70882"/>
<dbReference type="KEGG" id="mmu:70882"/>
<dbReference type="UCSC" id="uc008imd.2">
    <molecule id="A2AU72-1"/>
    <property type="organism name" value="mouse"/>
</dbReference>
<dbReference type="AGR" id="MGI:1918132"/>
<dbReference type="CTD" id="219681"/>
<dbReference type="MGI" id="MGI:1918132">
    <property type="gene designation" value="Armc3"/>
</dbReference>
<dbReference type="VEuPathDB" id="HostDB:ENSMUSG00000037683"/>
<dbReference type="eggNOG" id="KOG0167">
    <property type="taxonomic scope" value="Eukaryota"/>
</dbReference>
<dbReference type="GeneTree" id="ENSGT00940000157476"/>
<dbReference type="InParanoid" id="A2AU72"/>
<dbReference type="OMA" id="LYPMQSR"/>
<dbReference type="OrthoDB" id="7537227at2759"/>
<dbReference type="PhylomeDB" id="A2AU72"/>
<dbReference type="TreeFam" id="TF329738"/>
<dbReference type="BioGRID-ORCS" id="70882">
    <property type="hits" value="0 hits in 75 CRISPR screens"/>
</dbReference>
<dbReference type="ChiTaRS" id="Armc3">
    <property type="organism name" value="mouse"/>
</dbReference>
<dbReference type="PRO" id="PR:A2AU72"/>
<dbReference type="Proteomes" id="UP000000589">
    <property type="component" value="Chromosome 2"/>
</dbReference>
<dbReference type="RNAct" id="A2AU72">
    <property type="molecule type" value="protein"/>
</dbReference>
<dbReference type="Bgee" id="ENSMUSG00000037683">
    <property type="expression patterns" value="Expressed in spermatid and 48 other cell types or tissues"/>
</dbReference>
<dbReference type="ExpressionAtlas" id="A2AU72">
    <property type="expression patterns" value="baseline and differential"/>
</dbReference>
<dbReference type="GO" id="GO:0030317">
    <property type="term" value="P:flagellated sperm motility"/>
    <property type="evidence" value="ECO:0000315"/>
    <property type="project" value="UniProtKB"/>
</dbReference>
<dbReference type="GO" id="GO:0034517">
    <property type="term" value="P:ribophagy"/>
    <property type="evidence" value="ECO:0000315"/>
    <property type="project" value="UniProtKB"/>
</dbReference>
<dbReference type="GO" id="GO:0007286">
    <property type="term" value="P:spermatid development"/>
    <property type="evidence" value="ECO:0000315"/>
    <property type="project" value="UniProtKB"/>
</dbReference>
<dbReference type="Gene3D" id="1.25.10.10">
    <property type="entry name" value="Leucine-rich Repeat Variant"/>
    <property type="match status" value="3"/>
</dbReference>
<dbReference type="InterPro" id="IPR011989">
    <property type="entry name" value="ARM-like"/>
</dbReference>
<dbReference type="InterPro" id="IPR016024">
    <property type="entry name" value="ARM-type_fold"/>
</dbReference>
<dbReference type="InterPro" id="IPR000225">
    <property type="entry name" value="Armadillo"/>
</dbReference>
<dbReference type="InterPro" id="IPR052441">
    <property type="entry name" value="Armadillo-Ser/Thr_Kinase"/>
</dbReference>
<dbReference type="InterPro" id="IPR055164">
    <property type="entry name" value="EDR1/CTR1/ARMC3-like_pept-like"/>
</dbReference>
<dbReference type="PANTHER" id="PTHR46618">
    <property type="entry name" value="ARMADILLO REPEAT-CONTAINING PROTEIN 3"/>
    <property type="match status" value="1"/>
</dbReference>
<dbReference type="PANTHER" id="PTHR46618:SF1">
    <property type="entry name" value="ARMADILLO REPEAT-CONTAINING PROTEIN 3"/>
    <property type="match status" value="1"/>
</dbReference>
<dbReference type="Pfam" id="PF00514">
    <property type="entry name" value="Arm"/>
    <property type="match status" value="4"/>
</dbReference>
<dbReference type="Pfam" id="PF14381">
    <property type="entry name" value="EDR1_CTR1_ARMC3_pept"/>
    <property type="match status" value="1"/>
</dbReference>
<dbReference type="SMART" id="SM00185">
    <property type="entry name" value="ARM"/>
    <property type="match status" value="9"/>
</dbReference>
<dbReference type="SUPFAM" id="SSF48371">
    <property type="entry name" value="ARM repeat"/>
    <property type="match status" value="1"/>
</dbReference>
<dbReference type="PROSITE" id="PS50176">
    <property type="entry name" value="ARM_REPEAT"/>
    <property type="match status" value="2"/>
</dbReference>
<keyword id="KW-0025">Alternative splicing</keyword>
<keyword id="KW-0072">Autophagy</keyword>
<keyword id="KW-0221">Differentiation</keyword>
<keyword id="KW-0449">Lipoprotein</keyword>
<keyword id="KW-0564">Palmitate</keyword>
<keyword id="KW-1185">Reference proteome</keyword>
<keyword id="KW-0677">Repeat</keyword>
<keyword id="KW-0744">Spermatogenesis</keyword>